<keyword id="KW-0520">NAD</keyword>
<keyword id="KW-0560">Oxidoreductase</keyword>
<protein>
    <recommendedName>
        <fullName>Aldehyde dehydrogenase</fullName>
        <ecNumber>1.2.1.3</ecNumber>
    </recommendedName>
</protein>
<proteinExistence type="inferred from homology"/>
<dbReference type="EC" id="1.2.1.3"/>
<dbReference type="EMBL" id="Z25544">
    <property type="protein sequence ID" value="CAA80990.1"/>
    <property type="molecule type" value="Genomic_DNA"/>
</dbReference>
<dbReference type="PIR" id="S47644">
    <property type="entry name" value="S47644"/>
</dbReference>
<dbReference type="SMR" id="P45959"/>
<dbReference type="UniPathway" id="UPA00780">
    <property type="reaction ID" value="UER00768"/>
</dbReference>
<dbReference type="GO" id="GO:0004029">
    <property type="term" value="F:aldehyde dehydrogenase (NAD+) activity"/>
    <property type="evidence" value="ECO:0007669"/>
    <property type="project" value="UniProtKB-EC"/>
</dbReference>
<dbReference type="GO" id="GO:0006068">
    <property type="term" value="P:ethanol catabolic process"/>
    <property type="evidence" value="ECO:0007669"/>
    <property type="project" value="UniProtKB-UniPathway"/>
</dbReference>
<dbReference type="Gene3D" id="3.40.605.10">
    <property type="entry name" value="Aldehyde Dehydrogenase, Chain A, domain 1"/>
    <property type="match status" value="1"/>
</dbReference>
<dbReference type="InterPro" id="IPR016161">
    <property type="entry name" value="Ald_DH/histidinol_DH"/>
</dbReference>
<dbReference type="InterPro" id="IPR016162">
    <property type="entry name" value="Ald_DH_N"/>
</dbReference>
<dbReference type="InterPro" id="IPR015590">
    <property type="entry name" value="Aldehyde_DH_dom"/>
</dbReference>
<dbReference type="PANTHER" id="PTHR11699">
    <property type="entry name" value="ALDEHYDE DEHYDROGENASE-RELATED"/>
    <property type="match status" value="1"/>
</dbReference>
<dbReference type="Pfam" id="PF00171">
    <property type="entry name" value="Aldedh"/>
    <property type="match status" value="1"/>
</dbReference>
<dbReference type="SUPFAM" id="SSF53720">
    <property type="entry name" value="ALDH-like"/>
    <property type="match status" value="1"/>
</dbReference>
<reference key="1">
    <citation type="journal article" date="1994" name="Biochim. Biophys. Acta">
        <title>Gene structure and amino acid sequences of alcohol dehydrogenases of Bacillus stearothermophilus.</title>
        <authorList>
            <person name="Robinson G.A."/>
            <person name="Bailey C.J."/>
            <person name="Dowds B.C.A."/>
        </authorList>
    </citation>
    <scope>NUCLEOTIDE SEQUENCE [GENOMIC DNA]</scope>
    <source>
        <strain>DSM 2334 / Var. Non-diastaticus</strain>
    </source>
</reference>
<accession>P45959</accession>
<name>ALDH2_GEOSE</name>
<sequence>MMSSIAAPKLKEKVEKFLSGKKKMYINGSFVESASGKTFDTPNPATGERLATVYEGDAEDIDRAVKAAREAFD</sequence>
<feature type="chain" id="PRO_0000056443" description="Aldehyde dehydrogenase">
    <location>
        <begin position="1"/>
        <end position="73" status="greater than"/>
    </location>
</feature>
<feature type="non-terminal residue">
    <location>
        <position position="73"/>
    </location>
</feature>
<evidence type="ECO:0000305" key="1"/>
<organism>
    <name type="scientific">Geobacillus stearothermophilus</name>
    <name type="common">Bacillus stearothermophilus</name>
    <dbReference type="NCBI Taxonomy" id="1422"/>
    <lineage>
        <taxon>Bacteria</taxon>
        <taxon>Bacillati</taxon>
        <taxon>Bacillota</taxon>
        <taxon>Bacilli</taxon>
        <taxon>Bacillales</taxon>
        <taxon>Anoxybacillaceae</taxon>
        <taxon>Geobacillus</taxon>
    </lineage>
</organism>
<comment type="catalytic activity">
    <reaction>
        <text>an aldehyde + NAD(+) + H2O = a carboxylate + NADH + 2 H(+)</text>
        <dbReference type="Rhea" id="RHEA:16185"/>
        <dbReference type="ChEBI" id="CHEBI:15377"/>
        <dbReference type="ChEBI" id="CHEBI:15378"/>
        <dbReference type="ChEBI" id="CHEBI:17478"/>
        <dbReference type="ChEBI" id="CHEBI:29067"/>
        <dbReference type="ChEBI" id="CHEBI:57540"/>
        <dbReference type="ChEBI" id="CHEBI:57945"/>
        <dbReference type="EC" id="1.2.1.3"/>
    </reaction>
</comment>
<comment type="pathway">
    <text>Alcohol metabolism; ethanol degradation; acetate from ethanol: step 2/2.</text>
</comment>
<comment type="similarity">
    <text evidence="1">Belongs to the aldehyde dehydrogenase family.</text>
</comment>